<reference key="1">
    <citation type="submission" date="2007-03" db="EMBL/GenBank/DDBJ databases">
        <title>Complete sequence of Shewanella loihica PV-4.</title>
        <authorList>
            <consortium name="US DOE Joint Genome Institute"/>
            <person name="Copeland A."/>
            <person name="Lucas S."/>
            <person name="Lapidus A."/>
            <person name="Barry K."/>
            <person name="Detter J.C."/>
            <person name="Glavina del Rio T."/>
            <person name="Hammon N."/>
            <person name="Israni S."/>
            <person name="Dalin E."/>
            <person name="Tice H."/>
            <person name="Pitluck S."/>
            <person name="Chain P."/>
            <person name="Malfatti S."/>
            <person name="Shin M."/>
            <person name="Vergez L."/>
            <person name="Schmutz J."/>
            <person name="Larimer F."/>
            <person name="Land M."/>
            <person name="Hauser L."/>
            <person name="Kyrpides N."/>
            <person name="Mikhailova N."/>
            <person name="Romine M.F."/>
            <person name="Serres G."/>
            <person name="Fredrickson J."/>
            <person name="Tiedje J."/>
            <person name="Richardson P."/>
        </authorList>
    </citation>
    <scope>NUCLEOTIDE SEQUENCE [LARGE SCALE GENOMIC DNA]</scope>
    <source>
        <strain>ATCC BAA-1088 / PV-4</strain>
    </source>
</reference>
<accession>A3QBQ0</accession>
<keyword id="KW-0028">Amino-acid biosynthesis</keyword>
<keyword id="KW-0378">Hydrolase</keyword>
<keyword id="KW-0486">Methionine biosynthesis</keyword>
<keyword id="KW-1185">Reference proteome</keyword>
<comment type="function">
    <text evidence="1">Catalyzes the irreversible cleavage of the glycosidic bond in both 5'-methylthioadenosine (MTA) and S-adenosylhomocysteine (SAH/AdoHcy) to adenine and the corresponding thioribose, 5'-methylthioribose and S-ribosylhomocysteine, respectively. Also cleaves 5'-deoxyadenosine, a toxic by-product of radical S-adenosylmethionine (SAM) enzymes, into 5-deoxyribose and adenine.</text>
</comment>
<comment type="catalytic activity">
    <reaction evidence="1">
        <text>S-adenosyl-L-homocysteine + H2O = S-(5-deoxy-D-ribos-5-yl)-L-homocysteine + adenine</text>
        <dbReference type="Rhea" id="RHEA:17805"/>
        <dbReference type="ChEBI" id="CHEBI:15377"/>
        <dbReference type="ChEBI" id="CHEBI:16708"/>
        <dbReference type="ChEBI" id="CHEBI:57856"/>
        <dbReference type="ChEBI" id="CHEBI:58195"/>
        <dbReference type="EC" id="3.2.2.9"/>
    </reaction>
</comment>
<comment type="catalytic activity">
    <reaction evidence="1">
        <text>S-methyl-5'-thioadenosine + H2O = 5-(methylsulfanyl)-D-ribose + adenine</text>
        <dbReference type="Rhea" id="RHEA:13617"/>
        <dbReference type="ChEBI" id="CHEBI:15377"/>
        <dbReference type="ChEBI" id="CHEBI:16708"/>
        <dbReference type="ChEBI" id="CHEBI:17509"/>
        <dbReference type="ChEBI" id="CHEBI:78440"/>
        <dbReference type="EC" id="3.2.2.9"/>
    </reaction>
</comment>
<comment type="catalytic activity">
    <reaction evidence="1">
        <text>5'-deoxyadenosine + H2O = 5-deoxy-D-ribose + adenine</text>
        <dbReference type="Rhea" id="RHEA:29859"/>
        <dbReference type="ChEBI" id="CHEBI:15377"/>
        <dbReference type="ChEBI" id="CHEBI:16708"/>
        <dbReference type="ChEBI" id="CHEBI:17319"/>
        <dbReference type="ChEBI" id="CHEBI:149540"/>
        <dbReference type="EC" id="3.2.2.9"/>
    </reaction>
    <physiologicalReaction direction="left-to-right" evidence="1">
        <dbReference type="Rhea" id="RHEA:29860"/>
    </physiologicalReaction>
</comment>
<comment type="pathway">
    <text evidence="1">Amino-acid biosynthesis; L-methionine biosynthesis via salvage pathway; S-methyl-5-thio-alpha-D-ribose 1-phosphate from S-methyl-5'-thioadenosine (hydrolase route): step 1/2.</text>
</comment>
<comment type="similarity">
    <text evidence="1">Belongs to the PNP/UDP phosphorylase family. MtnN subfamily.</text>
</comment>
<protein>
    <recommendedName>
        <fullName evidence="1">5'-methylthioadenosine/S-adenosylhomocysteine nucleosidase</fullName>
        <shortName evidence="1">MTA/SAH nucleosidase</shortName>
        <shortName evidence="1">MTAN</shortName>
        <ecNumber evidence="1">3.2.2.9</ecNumber>
    </recommendedName>
    <alternativeName>
        <fullName evidence="1">5'-deoxyadenosine nucleosidase</fullName>
        <shortName evidence="1">DOA nucleosidase</shortName>
        <shortName evidence="1">dAdo nucleosidase</shortName>
    </alternativeName>
    <alternativeName>
        <fullName evidence="1">5'-methylthioadenosine nucleosidase</fullName>
        <shortName evidence="1">MTA nucleosidase</shortName>
    </alternativeName>
    <alternativeName>
        <fullName evidence="1">S-adenosylhomocysteine nucleosidase</fullName>
        <shortName evidence="1">AdoHcy nucleosidase</shortName>
        <shortName evidence="1">SAH nucleosidase</shortName>
        <shortName evidence="1">SRH nucleosidase</shortName>
    </alternativeName>
</protein>
<sequence length="230" mass="24466">MKIGIIGAMEPEVAHLIASMTDTQTQTIAGIEFVAGQLEGKEVIVTRSGIGKVTASVATTLLIEKYAPDYVINTGSAGGFVDSLAIGDIVISSEVRHHDVDVTAFGYEIGQMAQQPAAFMPDRTLVEAAKKAVADLGEVKAIEGLICTGDSFICDPERTKVMLNNFPTMAACEMEGAAIAQVCHQFKVPFVVIRSLSDNANNDSPVDFDSYLVKAGHHSALMVISLLKHL</sequence>
<proteinExistence type="inferred from homology"/>
<gene>
    <name evidence="1" type="primary">mtnN</name>
    <name type="ordered locus">Shew_1027</name>
</gene>
<evidence type="ECO:0000255" key="1">
    <source>
        <dbReference type="HAMAP-Rule" id="MF_01684"/>
    </source>
</evidence>
<name>MTNN_SHELP</name>
<dbReference type="EC" id="3.2.2.9" evidence="1"/>
<dbReference type="EMBL" id="CP000606">
    <property type="protein sequence ID" value="ABO22898.1"/>
    <property type="molecule type" value="Genomic_DNA"/>
</dbReference>
<dbReference type="RefSeq" id="WP_011864831.1">
    <property type="nucleotide sequence ID" value="NC_009092.1"/>
</dbReference>
<dbReference type="SMR" id="A3QBQ0"/>
<dbReference type="STRING" id="323850.Shew_1027"/>
<dbReference type="KEGG" id="slo:Shew_1027"/>
<dbReference type="eggNOG" id="COG0775">
    <property type="taxonomic scope" value="Bacteria"/>
</dbReference>
<dbReference type="HOGENOM" id="CLU_031248_2_2_6"/>
<dbReference type="OrthoDB" id="9792278at2"/>
<dbReference type="UniPathway" id="UPA00904">
    <property type="reaction ID" value="UER00871"/>
</dbReference>
<dbReference type="Proteomes" id="UP000001558">
    <property type="component" value="Chromosome"/>
</dbReference>
<dbReference type="GO" id="GO:0005829">
    <property type="term" value="C:cytosol"/>
    <property type="evidence" value="ECO:0007669"/>
    <property type="project" value="TreeGrafter"/>
</dbReference>
<dbReference type="GO" id="GO:0008782">
    <property type="term" value="F:adenosylhomocysteine nucleosidase activity"/>
    <property type="evidence" value="ECO:0007669"/>
    <property type="project" value="UniProtKB-UniRule"/>
</dbReference>
<dbReference type="GO" id="GO:0008930">
    <property type="term" value="F:methylthioadenosine nucleosidase activity"/>
    <property type="evidence" value="ECO:0007669"/>
    <property type="project" value="UniProtKB-UniRule"/>
</dbReference>
<dbReference type="GO" id="GO:0019509">
    <property type="term" value="P:L-methionine salvage from methylthioadenosine"/>
    <property type="evidence" value="ECO:0007669"/>
    <property type="project" value="UniProtKB-UniRule"/>
</dbReference>
<dbReference type="GO" id="GO:0019284">
    <property type="term" value="P:L-methionine salvage from S-adenosylmethionine"/>
    <property type="evidence" value="ECO:0007669"/>
    <property type="project" value="TreeGrafter"/>
</dbReference>
<dbReference type="GO" id="GO:0009164">
    <property type="term" value="P:nucleoside catabolic process"/>
    <property type="evidence" value="ECO:0007669"/>
    <property type="project" value="InterPro"/>
</dbReference>
<dbReference type="CDD" id="cd09008">
    <property type="entry name" value="MTAN"/>
    <property type="match status" value="1"/>
</dbReference>
<dbReference type="FunFam" id="3.40.50.1580:FF:000001">
    <property type="entry name" value="MTA/SAH nucleosidase family protein"/>
    <property type="match status" value="1"/>
</dbReference>
<dbReference type="Gene3D" id="3.40.50.1580">
    <property type="entry name" value="Nucleoside phosphorylase domain"/>
    <property type="match status" value="1"/>
</dbReference>
<dbReference type="HAMAP" id="MF_01684">
    <property type="entry name" value="Salvage_MtnN"/>
    <property type="match status" value="1"/>
</dbReference>
<dbReference type="InterPro" id="IPR010049">
    <property type="entry name" value="MTA_SAH_Nsdase"/>
</dbReference>
<dbReference type="InterPro" id="IPR000845">
    <property type="entry name" value="Nucleoside_phosphorylase_d"/>
</dbReference>
<dbReference type="InterPro" id="IPR035994">
    <property type="entry name" value="Nucleoside_phosphorylase_sf"/>
</dbReference>
<dbReference type="NCBIfam" id="TIGR01704">
    <property type="entry name" value="MTA_SAH-Nsdase"/>
    <property type="match status" value="1"/>
</dbReference>
<dbReference type="NCBIfam" id="NF004079">
    <property type="entry name" value="PRK05584.1"/>
    <property type="match status" value="1"/>
</dbReference>
<dbReference type="PANTHER" id="PTHR46832">
    <property type="entry name" value="5'-METHYLTHIOADENOSINE/S-ADENOSYLHOMOCYSTEINE NUCLEOSIDASE"/>
    <property type="match status" value="1"/>
</dbReference>
<dbReference type="PANTHER" id="PTHR46832:SF1">
    <property type="entry name" value="5'-METHYLTHIOADENOSINE_S-ADENOSYLHOMOCYSTEINE NUCLEOSIDASE"/>
    <property type="match status" value="1"/>
</dbReference>
<dbReference type="Pfam" id="PF01048">
    <property type="entry name" value="PNP_UDP_1"/>
    <property type="match status" value="1"/>
</dbReference>
<dbReference type="SUPFAM" id="SSF53167">
    <property type="entry name" value="Purine and uridine phosphorylases"/>
    <property type="match status" value="1"/>
</dbReference>
<feature type="chain" id="PRO_0000359346" description="5'-methylthioadenosine/S-adenosylhomocysteine nucleosidase">
    <location>
        <begin position="1"/>
        <end position="230"/>
    </location>
</feature>
<feature type="active site" description="Proton acceptor" evidence="1">
    <location>
        <position position="12"/>
    </location>
</feature>
<feature type="active site" description="Proton donor" evidence="1">
    <location>
        <position position="198"/>
    </location>
</feature>
<feature type="binding site" evidence="1">
    <location>
        <position position="78"/>
    </location>
    <ligand>
        <name>substrate</name>
    </ligand>
</feature>
<feature type="binding site" evidence="1">
    <location>
        <position position="153"/>
    </location>
    <ligand>
        <name>substrate</name>
    </ligand>
</feature>
<feature type="binding site" evidence="1">
    <location>
        <begin position="174"/>
        <end position="175"/>
    </location>
    <ligand>
        <name>substrate</name>
    </ligand>
</feature>
<organism>
    <name type="scientific">Shewanella loihica (strain ATCC BAA-1088 / PV-4)</name>
    <dbReference type="NCBI Taxonomy" id="323850"/>
    <lineage>
        <taxon>Bacteria</taxon>
        <taxon>Pseudomonadati</taxon>
        <taxon>Pseudomonadota</taxon>
        <taxon>Gammaproteobacteria</taxon>
        <taxon>Alteromonadales</taxon>
        <taxon>Shewanellaceae</taxon>
        <taxon>Shewanella</taxon>
    </lineage>
</organism>